<geneLocation type="plasmid">
    <name>pCG8245</name>
</geneLocation>
<geneLocation type="plasmid">
    <name>pGMI16-002</name>
</geneLocation>
<name>S9AD_CAMJU</name>
<protein>
    <recommendedName>
        <fullName>Spectinomycin 9-adenylyltransferase</fullName>
    </recommendedName>
    <alternativeName>
        <fullName evidence="2">ORF8</fullName>
    </alternativeName>
</protein>
<sequence length="258" mass="29316">MNINEFPQQVNQVISIAETILQGQILGIYLYGSATMNGLRPDSDIDILIITKQELSNSIRADLTKQLLKISGSVGCIEKRPLEVTIINQSDIVPLQFPPKCQYMYGEWLRGEMEAGEYPQACNDPDIMILLWQARKNSITLKGAESKELIPAIPFHEIKKAIRFSLPGLISSFKGDERNVLLTLSRMWFTLVTEEITTKDVAAKWVILKLPERFPPLLTTAKEAYLGNLSDEWETVEKEAMALVEYMKKQIEELLRTE</sequence>
<feature type="chain" id="PRO_0000450271" description="Spectinomycin 9-adenylyltransferase">
    <location>
        <begin position="1"/>
        <end position="258"/>
    </location>
</feature>
<dbReference type="EMBL" id="AY701528">
    <property type="protein sequence ID" value="AAW34145.1"/>
    <property type="molecule type" value="Genomic_DNA"/>
</dbReference>
<dbReference type="EMBL" id="CP028186">
    <property type="protein sequence ID" value="AVS37844.1"/>
    <property type="molecule type" value="Genomic_DNA"/>
</dbReference>
<dbReference type="SMR" id="Q4VR99"/>
<dbReference type="GO" id="GO:0070566">
    <property type="term" value="F:adenylyltransferase activity"/>
    <property type="evidence" value="ECO:0007669"/>
    <property type="project" value="InterPro"/>
</dbReference>
<dbReference type="GO" id="GO:0046677">
    <property type="term" value="P:response to antibiotic"/>
    <property type="evidence" value="ECO:0007669"/>
    <property type="project" value="UniProtKB-KW"/>
</dbReference>
<dbReference type="CDD" id="cd05403">
    <property type="entry name" value="NT_KNTase_like"/>
    <property type="match status" value="1"/>
</dbReference>
<dbReference type="Gene3D" id="3.30.460.10">
    <property type="entry name" value="Beta Polymerase, domain 2"/>
    <property type="match status" value="1"/>
</dbReference>
<dbReference type="InterPro" id="IPR024172">
    <property type="entry name" value="AadA/Aad9"/>
</dbReference>
<dbReference type="InterPro" id="IPR025184">
    <property type="entry name" value="AadA_C"/>
</dbReference>
<dbReference type="InterPro" id="IPR043519">
    <property type="entry name" value="NT_sf"/>
</dbReference>
<dbReference type="InterPro" id="IPR041633">
    <property type="entry name" value="Polbeta"/>
</dbReference>
<dbReference type="NCBIfam" id="NF012212">
    <property type="entry name" value="ANT_9"/>
    <property type="match status" value="1"/>
</dbReference>
<dbReference type="NCBIfam" id="NF010309">
    <property type="entry name" value="PRK13746.1"/>
    <property type="match status" value="1"/>
</dbReference>
<dbReference type="Pfam" id="PF13427">
    <property type="entry name" value="AadA_C"/>
    <property type="match status" value="1"/>
</dbReference>
<dbReference type="Pfam" id="PF18765">
    <property type="entry name" value="Polbeta"/>
    <property type="match status" value="1"/>
</dbReference>
<dbReference type="PIRSF" id="PIRSF000819">
    <property type="entry name" value="Streptomycin_3-adenylyltransf"/>
    <property type="match status" value="1"/>
</dbReference>
<dbReference type="SUPFAM" id="SSF81301">
    <property type="entry name" value="Nucleotidyltransferase"/>
    <property type="match status" value="1"/>
</dbReference>
<reference key="1">
    <citation type="journal article" date="2005" name="Antimicrob. Agents Chemother.">
        <title>Mosaic structure of a multiple-drug-resistant, conjugative plasmid from Campylobacter jejuni.</title>
        <authorList>
            <person name="Nirdnoy W."/>
            <person name="Mason C.J."/>
            <person name="Guerry P."/>
        </authorList>
    </citation>
    <scope>NUCLEOTIDE SEQUENCE [GENOMIC DNA]</scope>
    <scope>FUNCTION IN RESISTANCE TO SPECTINOMYCIN</scope>
    <scope>DISRUPTION PHENOTYPE</scope>
    <source>
        <strain>CG8245 / Serotype Lior 19</strain>
        <plasmid>pCG8245</plasmid>
    </source>
</reference>
<reference key="2">
    <citation type="submission" date="2018-03" db="EMBL/GenBank/DDBJ databases">
        <title>Genome assemblies for Global Microbial Identifier (GMI) Proficiency Testing reference strains.</title>
        <authorList>
            <person name="Hoffmann M."/>
            <person name="Pedersen S.K."/>
            <person name="Sanchez M."/>
            <person name="Pettengill J.B."/>
            <person name="Hendriksen R.S."/>
        </authorList>
    </citation>
    <scope>NUCLEOTIDE SEQUENCE [LARGE SCALE GENOMIC DNA]</scope>
    <source>
        <strain>CFSAN054107</strain>
        <plasmid>pGMI16-002</plasmid>
    </source>
</reference>
<organism>
    <name type="scientific">Campylobacter jejuni</name>
    <dbReference type="NCBI Taxonomy" id="197"/>
    <lineage>
        <taxon>Bacteria</taxon>
        <taxon>Pseudomonadati</taxon>
        <taxon>Campylobacterota</taxon>
        <taxon>Epsilonproteobacteria</taxon>
        <taxon>Campylobacterales</taxon>
        <taxon>Campylobacteraceae</taxon>
        <taxon>Campylobacter</taxon>
    </lineage>
</organism>
<keyword id="KW-0046">Antibiotic resistance</keyword>
<keyword id="KW-0614">Plasmid</keyword>
<keyword id="KW-0808">Transferase</keyword>
<proteinExistence type="evidence at protein level"/>
<evidence type="ECO:0000269" key="1">
    <source>
    </source>
</evidence>
<evidence type="ECO:0000303" key="2">
    <source>
    </source>
</evidence>
<evidence type="ECO:0000305" key="3">
    <source>
    </source>
</evidence>
<gene>
    <name evidence="2" type="primary">aad9</name>
    <name type="ORF">C9J79_09630</name>
</gene>
<accession>Q4VR99</accession>
<comment type="function">
    <text evidence="1">Mediates bacterial resistance to spectinomycin, is probably a spectinomycin 9-adenylyltransferase.</text>
</comment>
<comment type="catalytic activity">
    <reaction evidence="3">
        <text>spectinomycin + ATP = 9-O-adenylylspectinomycin + diphosphate</text>
        <dbReference type="Rhea" id="RHEA:63228"/>
        <dbReference type="ChEBI" id="CHEBI:30616"/>
        <dbReference type="ChEBI" id="CHEBI:33019"/>
        <dbReference type="ChEBI" id="CHEBI:146260"/>
        <dbReference type="ChEBI" id="CHEBI:146261"/>
    </reaction>
</comment>
<comment type="disruption phenotype">
    <text evidence="1">Loss of spectinomycin resistance.</text>
</comment>